<comment type="subcellular location">
    <subcellularLocation>
        <location evidence="6">Membrane</location>
        <topology evidence="6">Multi-pass membrane protein</topology>
    </subcellularLocation>
</comment>
<comment type="alternative products">
    <event type="alternative splicing"/>
    <isoform>
        <id>Q9JHH2-1</id>
        <name>6</name>
        <sequence type="displayed"/>
    </isoform>
    <isoform>
        <id>Q9JHH2-2</id>
        <name>1</name>
        <sequence type="described" ref="VSP_003939"/>
    </isoform>
    <isoform>
        <id>Q9JHH2-3</id>
        <name>2</name>
        <sequence type="described" ref="VSP_003939 VSP_003941"/>
    </isoform>
    <isoform>
        <id>Q9JHH2-4</id>
        <name>3</name>
        <sequence type="described" ref="VSP_003939 VSP_003942 VSP_003943"/>
    </isoform>
    <isoform>
        <id>Q9JHH2-5</id>
        <name>4</name>
        <sequence type="described" ref="VSP_003939 VSP_003940 VSP_003941"/>
    </isoform>
    <isoform>
        <id>Q9JHH2-6</id>
        <name>5</name>
        <sequence type="described" ref="VSP_003939 VSP_003940 VSP_003942"/>
    </isoform>
    <text>Additional isoforms seem to exist.</text>
</comment>
<comment type="tissue specificity">
    <text evidence="2">Expressed exclusively in hematopoietic tissues. Expression detected in spleen, thymus, bone marrow and peripheral blood leukocytes but not in heart, brain, lung, liver, kidney or testis.</text>
</comment>
<comment type="developmental stage">
    <text evidence="2">Expressed from early embryogenesis through to adulthood.</text>
</comment>
<comment type="similarity">
    <text evidence="6">Belongs to the tetraspanin (TM4SF) family.</text>
</comment>
<proteinExistence type="evidence at transcript level"/>
<organism>
    <name type="scientific">Mus musculus</name>
    <name type="common">Mouse</name>
    <dbReference type="NCBI Taxonomy" id="10090"/>
    <lineage>
        <taxon>Eukaryota</taxon>
        <taxon>Metazoa</taxon>
        <taxon>Chordata</taxon>
        <taxon>Craniata</taxon>
        <taxon>Vertebrata</taxon>
        <taxon>Euteleostomi</taxon>
        <taxon>Mammalia</taxon>
        <taxon>Eutheria</taxon>
        <taxon>Euarchontoglires</taxon>
        <taxon>Glires</taxon>
        <taxon>Rodentia</taxon>
        <taxon>Myomorpha</taxon>
        <taxon>Muroidea</taxon>
        <taxon>Muridae</taxon>
        <taxon>Murinae</taxon>
        <taxon>Mus</taxon>
        <taxon>Mus</taxon>
    </lineage>
</organism>
<gene>
    <name type="primary">Tspan32</name>
    <name type="synonym">Art1</name>
    <name type="synonym">Phemx</name>
    <name type="synonym">Tssc6</name>
</gene>
<sequence>MGHWNRIKIAKCQILITNFLVLLLGLSMATMVVVIHFGDHFTVIGHASLERNPYETLRYWAFYVGISLAGLLSLGAALSTIATVREAHGLMAAGFLCFALSFCILVQVAFWRFYNPTQVEDAVLDTYDFVYDQAMKSPSSNWWQELAVIQDTFLCCGKKSPFGLLVSTGAIMCQGREAMREDCLQSIRNVLWTHYSIASILTCTSLALTVYAMMLCAFLWFAIHSYHGLDRKGRYSLTPPRSHGFQTQEPSLFRWT</sequence>
<feature type="chain" id="PRO_0000219279" description="Tetraspanin-32">
    <location>
        <begin position="1"/>
        <end position="256"/>
    </location>
</feature>
<feature type="transmembrane region" description="Helical" evidence="1">
    <location>
        <begin position="15"/>
        <end position="35"/>
    </location>
</feature>
<feature type="transmembrane region" description="Helical" evidence="1">
    <location>
        <begin position="61"/>
        <end position="81"/>
    </location>
</feature>
<feature type="transmembrane region" description="Helical" evidence="1">
    <location>
        <begin position="90"/>
        <end position="110"/>
    </location>
</feature>
<feature type="transmembrane region" description="Helical" evidence="1">
    <location>
        <begin position="203"/>
        <end position="223"/>
    </location>
</feature>
<feature type="splice variant" id="VSP_003939" description="In isoform 1, isoform 2, isoform 3, isoform 4 and isoform 5." evidence="3 4 5">
    <location>
        <begin position="1"/>
        <end position="30"/>
    </location>
</feature>
<feature type="splice variant" id="VSP_003940" description="In isoform 4 and isoform 5." evidence="3">
    <location>
        <begin position="119"/>
        <end position="152"/>
    </location>
</feature>
<feature type="splice variant" id="VSP_003941" description="In isoform 2 and isoform 4." evidence="3">
    <location>
        <begin position="182"/>
        <end position="209"/>
    </location>
</feature>
<feature type="splice variant" id="VSP_003942" description="In isoform 3 and isoform 5." evidence="3">
    <original>DCLQSIRNVLWTHYSIASILTCTSL</original>
    <variation>IPWFPDPGTQPLQMDLGWAGASMPC</variation>
    <location>
        <begin position="182"/>
        <end position="206"/>
    </location>
</feature>
<feature type="splice variant" id="VSP_003943" description="In isoform 3." evidence="3">
    <location>
        <begin position="207"/>
        <end position="236"/>
    </location>
</feature>
<feature type="sequence conflict" description="In Ref. 1; AAG27268." evidence="6" ref="1">
    <original>Q</original>
    <variation>L</variation>
    <location>
        <position position="174"/>
    </location>
</feature>
<feature type="sequence conflict" description="In Ref. 1; AAG27268." evidence="6" ref="1">
    <original>Y</original>
    <variation>F</variation>
    <location>
        <position position="235"/>
    </location>
</feature>
<evidence type="ECO:0000255" key="1"/>
<evidence type="ECO:0000269" key="2">
    <source>
    </source>
</evidence>
<evidence type="ECO:0000303" key="3">
    <source>
    </source>
</evidence>
<evidence type="ECO:0000303" key="4">
    <source>
    </source>
</evidence>
<evidence type="ECO:0000303" key="5">
    <source>
    </source>
</evidence>
<evidence type="ECO:0000305" key="6"/>
<protein>
    <recommendedName>
        <fullName>Tetraspanin-32</fullName>
        <shortName>Tspan-32</shortName>
    </recommendedName>
    <alternativeName>
        <fullName>AML1-regulated transmembrane protein 1</fullName>
    </alternativeName>
    <alternativeName>
        <fullName>Protein Phemx</fullName>
    </alternativeName>
</protein>
<keyword id="KW-0025">Alternative splicing</keyword>
<keyword id="KW-0472">Membrane</keyword>
<keyword id="KW-1185">Reference proteome</keyword>
<keyword id="KW-0812">Transmembrane</keyword>
<keyword id="KW-1133">Transmembrane helix</keyword>
<reference key="1">
    <citation type="journal article" date="2000" name="Genomics">
        <title>Phemx, a novel mouse gene expressed in hematopoietic cells maps to the imprinted cluster on distal chromosome 7.</title>
        <authorList>
            <person name="Nicholson R.H."/>
            <person name="Pantano S."/>
            <person name="Eliason J.F."/>
            <person name="Galy A."/>
            <person name="Weiler S."/>
            <person name="Kaplan J."/>
            <person name="Hughes M.R."/>
            <person name="Ko M.S.H."/>
        </authorList>
    </citation>
    <scope>NUCLEOTIDE SEQUENCE [MRNA] (ISOFORM 1)</scope>
    <scope>TISSUE SPECIFICITY</scope>
    <scope>DEVELOPMENTAL STAGE</scope>
    <source>
        <strain>C57BL/6J</strain>
    </source>
</reference>
<reference key="2">
    <citation type="journal article" date="2000" name="Hum. Mol. Genet.">
        <title>Sequence conservation and variability of imprinting in the Beckwith-Wiedemann syndrome gene cluster in human and mouse.</title>
        <authorList>
            <person name="Paulsen M."/>
            <person name="El-Maarri O."/>
            <person name="Engemann S."/>
            <person name="Stroedicke M."/>
            <person name="Franck O."/>
            <person name="Davies K."/>
            <person name="Reinhardt R."/>
            <person name="Reik W."/>
            <person name="Walter J."/>
        </authorList>
    </citation>
    <scope>NUCLEOTIDE SEQUENCE [GENOMIC DNA / MRNA] (ISOFORMS 1; 2; 3; 4 AND 5)</scope>
    <source>
        <strain>129/Sv</strain>
        <strain>C57BL/6J</strain>
    </source>
</reference>
<reference key="3">
    <citation type="journal article" date="2001" name="Biochim. Biophys. Acta">
        <title>Molecular characterisation of mouse and human TSSC6: evidence that TSSC6 is a genuine member of the tetraspanin superfamily and is expressed specifically in haematopoietic organs.</title>
        <authorList>
            <person name="Robb L."/>
            <person name="Tarrant J."/>
            <person name="Groom J."/>
            <person name="Ibrahim M."/>
            <person name="Li R."/>
            <person name="Borobakas B."/>
            <person name="Wright M.D."/>
        </authorList>
    </citation>
    <scope>NUCLEOTIDE SEQUENCE (ISOFORM 6)</scope>
</reference>
<reference key="4">
    <citation type="journal article" date="2001" name="Biochem. Biophys. Res. Commun.">
        <title>A hematopoietic-specific transmembrane protein, Art-1, is possibly regulated by aml1.</title>
        <authorList>
            <person name="Harada Y."/>
            <person name="Harada H."/>
            <person name="Downing J.R."/>
            <person name="Kimura A."/>
        </authorList>
    </citation>
    <scope>NUCLEOTIDE SEQUENCE [MRNA] (ISOFORM 1)</scope>
    <source>
        <strain>C57BL/6J</strain>
        <tissue>Spleen</tissue>
    </source>
</reference>
<name>TSN32_MOUSE</name>
<accession>Q9JHH2</accession>
<accession>Q923G9</accession>
<accession>Q9ESH0</accession>
<accession>Q9JHQ9</accession>
<accession>Q9JHR0</accession>
<accession>Q9JHR1</accession>
<accession>Q9JHR2</accession>
<accession>Q9JHS8</accession>
<dbReference type="EMBL" id="AF175771">
    <property type="protein sequence ID" value="AAG27268.1"/>
    <property type="molecule type" value="mRNA"/>
</dbReference>
<dbReference type="EMBL" id="AJ251788">
    <property type="protein sequence ID" value="CAB94716.1"/>
    <property type="molecule type" value="Genomic_DNA"/>
</dbReference>
<dbReference type="EMBL" id="AJ251835">
    <property type="protein sequence ID" value="CAB94777.1"/>
    <property type="molecule type" value="Genomic_DNA"/>
</dbReference>
<dbReference type="EMBL" id="AJ279791">
    <property type="protein sequence ID" value="CAB94719.1"/>
    <property type="molecule type" value="mRNA"/>
</dbReference>
<dbReference type="EMBL" id="AJ279792">
    <property type="protein sequence ID" value="CAB94720.1"/>
    <property type="molecule type" value="mRNA"/>
</dbReference>
<dbReference type="EMBL" id="AJ279793">
    <property type="protein sequence ID" value="CAB94721.1"/>
    <property type="molecule type" value="mRNA"/>
</dbReference>
<dbReference type="EMBL" id="AJ279794">
    <property type="protein sequence ID" value="CAB94722.1"/>
    <property type="molecule type" value="mRNA"/>
</dbReference>
<dbReference type="EMBL" id="AJ279795">
    <property type="protein sequence ID" value="CAB94723.1"/>
    <property type="molecule type" value="mRNA"/>
</dbReference>
<dbReference type="EMBL" id="AY039000">
    <property type="protein sequence ID" value="AAK84430.1"/>
    <property type="molecule type" value="mRNA"/>
</dbReference>
<dbReference type="EMBL" id="AF291425">
    <property type="protein sequence ID" value="AAK83110.1"/>
    <property type="molecule type" value="mRNA"/>
</dbReference>
<dbReference type="CCDS" id="CCDS52459.1">
    <molecule id="Q9JHH2-1"/>
</dbReference>
<dbReference type="RefSeq" id="NP_001121552.1">
    <molecule id="Q9JHH2-1"/>
    <property type="nucleotide sequence ID" value="NM_001128080.2"/>
</dbReference>
<dbReference type="RefSeq" id="NP_001121553.1">
    <property type="nucleotide sequence ID" value="NM_001128081.1"/>
</dbReference>
<dbReference type="RefSeq" id="NP_001121554.1">
    <property type="nucleotide sequence ID" value="NM_001128082.1"/>
</dbReference>
<dbReference type="RefSeq" id="NP_064682.1">
    <property type="nucleotide sequence ID" value="NM_020286.3"/>
</dbReference>
<dbReference type="SMR" id="Q9JHH2"/>
<dbReference type="BioGRID" id="205099">
    <property type="interactions" value="1"/>
</dbReference>
<dbReference type="FunCoup" id="Q9JHH2">
    <property type="interactions" value="13"/>
</dbReference>
<dbReference type="STRING" id="10090.ENSMUSP00000009396"/>
<dbReference type="PhosphoSitePlus" id="Q9JHH2"/>
<dbReference type="PaxDb" id="10090-ENSMUSP00000009396"/>
<dbReference type="Antibodypedia" id="10387">
    <property type="antibodies" value="195 antibodies from 28 providers"/>
</dbReference>
<dbReference type="DNASU" id="27027"/>
<dbReference type="Ensembl" id="ENSMUST00000009396.13">
    <molecule id="Q9JHH2-1"/>
    <property type="protein sequence ID" value="ENSMUSP00000009396.7"/>
    <property type="gene ID" value="ENSMUSG00000000244.18"/>
</dbReference>
<dbReference type="GeneID" id="27027"/>
<dbReference type="KEGG" id="mmu:27027"/>
<dbReference type="UCSC" id="uc009kom.2">
    <molecule id="Q9JHH2-1"/>
    <property type="organism name" value="mouse"/>
</dbReference>
<dbReference type="AGR" id="MGI:1350360"/>
<dbReference type="CTD" id="10077"/>
<dbReference type="MGI" id="MGI:1350360">
    <property type="gene designation" value="Tspan32"/>
</dbReference>
<dbReference type="VEuPathDB" id="HostDB:ENSMUSG00000000244"/>
<dbReference type="eggNOG" id="ENOG502S0ED">
    <property type="taxonomic scope" value="Eukaryota"/>
</dbReference>
<dbReference type="GeneTree" id="ENSGT00390000003287"/>
<dbReference type="HOGENOM" id="CLU_076116_0_0_1"/>
<dbReference type="InParanoid" id="Q9JHH2"/>
<dbReference type="OMA" id="WAFCTSI"/>
<dbReference type="OrthoDB" id="9886271at2759"/>
<dbReference type="PhylomeDB" id="Q9JHH2"/>
<dbReference type="TreeFam" id="TF336277"/>
<dbReference type="BioGRID-ORCS" id="27027">
    <property type="hits" value="2 hits in 76 CRISPR screens"/>
</dbReference>
<dbReference type="ChiTaRS" id="Art1">
    <property type="organism name" value="mouse"/>
</dbReference>
<dbReference type="PRO" id="PR:Q9JHH2"/>
<dbReference type="Proteomes" id="UP000000589">
    <property type="component" value="Chromosome 7"/>
</dbReference>
<dbReference type="RNAct" id="Q9JHH2">
    <property type="molecule type" value="protein"/>
</dbReference>
<dbReference type="Bgee" id="ENSMUSG00000000244">
    <property type="expression patterns" value="Expressed in granulocyte and 105 other cell types or tissues"/>
</dbReference>
<dbReference type="ExpressionAtlas" id="Q9JHH2">
    <property type="expression patterns" value="baseline and differential"/>
</dbReference>
<dbReference type="GO" id="GO:0009986">
    <property type="term" value="C:cell surface"/>
    <property type="evidence" value="ECO:0000314"/>
    <property type="project" value="MGI"/>
</dbReference>
<dbReference type="GO" id="GO:0070442">
    <property type="term" value="C:integrin alphaIIb-beta3 complex"/>
    <property type="evidence" value="ECO:0000314"/>
    <property type="project" value="MGI"/>
</dbReference>
<dbReference type="GO" id="GO:0007596">
    <property type="term" value="P:blood coagulation"/>
    <property type="evidence" value="ECO:0000315"/>
    <property type="project" value="MGI"/>
</dbReference>
<dbReference type="GO" id="GO:0007010">
    <property type="term" value="P:cytoskeleton organization"/>
    <property type="evidence" value="ECO:0000315"/>
    <property type="project" value="MGI"/>
</dbReference>
<dbReference type="GO" id="GO:0042832">
    <property type="term" value="P:defense response to protozoan"/>
    <property type="evidence" value="ECO:0000316"/>
    <property type="project" value="MGI"/>
</dbReference>
<dbReference type="GO" id="GO:0007599">
    <property type="term" value="P:hemostasis"/>
    <property type="evidence" value="ECO:0000315"/>
    <property type="project" value="MGI"/>
</dbReference>
<dbReference type="GO" id="GO:0007229">
    <property type="term" value="P:integrin-mediated signaling pathway"/>
    <property type="evidence" value="ECO:0000315"/>
    <property type="project" value="MGI"/>
</dbReference>
<dbReference type="GO" id="GO:0030886">
    <property type="term" value="P:negative regulation of myeloid dendritic cell activation"/>
    <property type="evidence" value="ECO:0000316"/>
    <property type="project" value="MGI"/>
</dbReference>
<dbReference type="GO" id="GO:0042130">
    <property type="term" value="P:negative regulation of T cell proliferation"/>
    <property type="evidence" value="ECO:0000316"/>
    <property type="project" value="MGI"/>
</dbReference>
<dbReference type="GO" id="GO:0070527">
    <property type="term" value="P:platelet aggregation"/>
    <property type="evidence" value="ECO:0000315"/>
    <property type="project" value="MGI"/>
</dbReference>
<dbReference type="GO" id="GO:0050688">
    <property type="term" value="P:regulation of defense response to virus"/>
    <property type="evidence" value="ECO:0000316"/>
    <property type="project" value="MGI"/>
</dbReference>
<dbReference type="GO" id="GO:0042098">
    <property type="term" value="P:T cell proliferation"/>
    <property type="evidence" value="ECO:0000316"/>
    <property type="project" value="MGI"/>
</dbReference>
<dbReference type="CDD" id="cd03153">
    <property type="entry name" value="PHEMX_like_LEL"/>
    <property type="match status" value="1"/>
</dbReference>
<dbReference type="FunFam" id="1.10.1450.10:FF:000022">
    <property type="entry name" value="Tetraspanin 32"/>
    <property type="match status" value="1"/>
</dbReference>
<dbReference type="Gene3D" id="1.10.1450.10">
    <property type="entry name" value="Tetraspanin"/>
    <property type="match status" value="1"/>
</dbReference>
<dbReference type="InterPro" id="IPR042782">
    <property type="entry name" value="PHEMX_LEL"/>
</dbReference>
<dbReference type="InterPro" id="IPR018499">
    <property type="entry name" value="Tetraspanin/Peripherin"/>
</dbReference>
<dbReference type="InterPro" id="IPR000301">
    <property type="entry name" value="Tetraspanin_animals"/>
</dbReference>
<dbReference type="InterPro" id="IPR008952">
    <property type="entry name" value="Tetraspanin_EC2_sf"/>
</dbReference>
<dbReference type="Pfam" id="PF00335">
    <property type="entry name" value="Tetraspanin"/>
    <property type="match status" value="1"/>
</dbReference>
<dbReference type="PIRSF" id="PIRSF002419">
    <property type="entry name" value="Tetraspanin"/>
    <property type="match status" value="1"/>
</dbReference>
<dbReference type="SUPFAM" id="SSF48652">
    <property type="entry name" value="Tetraspanin"/>
    <property type="match status" value="1"/>
</dbReference>